<organism>
    <name type="scientific">Oryza sativa subsp. japonica</name>
    <name type="common">Rice</name>
    <dbReference type="NCBI Taxonomy" id="39947"/>
    <lineage>
        <taxon>Eukaryota</taxon>
        <taxon>Viridiplantae</taxon>
        <taxon>Streptophyta</taxon>
        <taxon>Embryophyta</taxon>
        <taxon>Tracheophyta</taxon>
        <taxon>Spermatophyta</taxon>
        <taxon>Magnoliopsida</taxon>
        <taxon>Liliopsida</taxon>
        <taxon>Poales</taxon>
        <taxon>Poaceae</taxon>
        <taxon>BOP clade</taxon>
        <taxon>Oryzoideae</taxon>
        <taxon>Oryzeae</taxon>
        <taxon>Oryzinae</taxon>
        <taxon>Oryza</taxon>
        <taxon>Oryza sativa</taxon>
    </lineage>
</organism>
<feature type="chain" id="PRO_0000382644" description="Probable cinnamyl alcohol dehydrogenase 5">
    <location>
        <begin position="1"/>
        <end position="354"/>
    </location>
</feature>
<feature type="binding site" evidence="1">
    <location>
        <position position="43"/>
    </location>
    <ligand>
        <name>Zn(2+)</name>
        <dbReference type="ChEBI" id="CHEBI:29105"/>
        <label>1</label>
        <note>catalytic</note>
    </ligand>
</feature>
<feature type="binding site" evidence="1">
    <location>
        <position position="45"/>
    </location>
    <ligand>
        <name>NADP(+)</name>
        <dbReference type="ChEBI" id="CHEBI:58349"/>
    </ligand>
</feature>
<feature type="binding site" evidence="1">
    <location>
        <position position="65"/>
    </location>
    <ligand>
        <name>Zn(2+)</name>
        <dbReference type="ChEBI" id="CHEBI:29105"/>
        <label>1</label>
        <note>catalytic</note>
    </ligand>
</feature>
<feature type="binding site" evidence="1">
    <location>
        <position position="66"/>
    </location>
    <ligand>
        <name>Zn(2+)</name>
        <dbReference type="ChEBI" id="CHEBI:29105"/>
        <label>1</label>
        <note>catalytic</note>
    </ligand>
</feature>
<feature type="binding site" evidence="1">
    <location>
        <position position="96"/>
    </location>
    <ligand>
        <name>Zn(2+)</name>
        <dbReference type="ChEBI" id="CHEBI:29105"/>
        <label>2</label>
    </ligand>
</feature>
<feature type="binding site" evidence="1">
    <location>
        <position position="99"/>
    </location>
    <ligand>
        <name>Zn(2+)</name>
        <dbReference type="ChEBI" id="CHEBI:29105"/>
        <label>2</label>
    </ligand>
</feature>
<feature type="binding site" evidence="1">
    <location>
        <position position="102"/>
    </location>
    <ligand>
        <name>Zn(2+)</name>
        <dbReference type="ChEBI" id="CHEBI:29105"/>
        <label>2</label>
    </ligand>
</feature>
<feature type="binding site" evidence="1">
    <location>
        <position position="110"/>
    </location>
    <ligand>
        <name>Zn(2+)</name>
        <dbReference type="ChEBI" id="CHEBI:29105"/>
        <label>2</label>
    </ligand>
</feature>
<feature type="binding site" evidence="1">
    <location>
        <position position="159"/>
    </location>
    <ligand>
        <name>Zn(2+)</name>
        <dbReference type="ChEBI" id="CHEBI:29105"/>
        <label>1</label>
        <note>catalytic</note>
    </ligand>
</feature>
<feature type="binding site" evidence="1">
    <location>
        <position position="163"/>
    </location>
    <ligand>
        <name>NADP(+)</name>
        <dbReference type="ChEBI" id="CHEBI:58349"/>
    </ligand>
</feature>
<feature type="binding site" evidence="1">
    <location>
        <begin position="184"/>
        <end position="189"/>
    </location>
    <ligand>
        <name>NADP(+)</name>
        <dbReference type="ChEBI" id="CHEBI:58349"/>
    </ligand>
</feature>
<feature type="binding site" evidence="1">
    <location>
        <begin position="207"/>
        <end position="212"/>
    </location>
    <ligand>
        <name>NADP(+)</name>
        <dbReference type="ChEBI" id="CHEBI:58349"/>
    </ligand>
</feature>
<feature type="binding site" evidence="1">
    <location>
        <position position="247"/>
    </location>
    <ligand>
        <name>NADP(+)</name>
        <dbReference type="ChEBI" id="CHEBI:58349"/>
    </ligand>
</feature>
<feature type="binding site" evidence="1">
    <location>
        <position position="271"/>
    </location>
    <ligand>
        <name>NADP(+)</name>
        <dbReference type="ChEBI" id="CHEBI:58349"/>
    </ligand>
</feature>
<feature type="binding site" evidence="1">
    <location>
        <begin position="294"/>
        <end position="296"/>
    </location>
    <ligand>
        <name>NADP(+)</name>
        <dbReference type="ChEBI" id="CHEBI:58349"/>
    </ligand>
</feature>
<feature type="sequence conflict" description="In Ref. 4; EAZ42130." evidence="3" ref="4">
    <original>D</original>
    <variation>E</variation>
    <location>
        <position position="13"/>
    </location>
</feature>
<gene>
    <name evidence="2" type="primary">CAD5</name>
    <name type="ordered locus">Os08g0270400</name>
    <name type="ordered locus">Os08g0270433</name>
    <name type="ordered locus">Os08g0270466</name>
    <name type="ordered locus">LOC_Os08g16910</name>
    <name type="ORF">OsJ_26689</name>
</gene>
<evidence type="ECO:0000250" key="1">
    <source>
        <dbReference type="UniProtKB" id="O49482"/>
    </source>
</evidence>
<evidence type="ECO:0000303" key="2">
    <source>
    </source>
</evidence>
<evidence type="ECO:0000305" key="3"/>
<protein>
    <recommendedName>
        <fullName evidence="3">Probable cinnamyl alcohol dehydrogenase 5</fullName>
        <shortName evidence="2">OsCAD5</shortName>
        <ecNumber evidence="1">1.1.1.195</ecNumber>
    </recommendedName>
</protein>
<sequence>MAPTAAAGLAARDASGHLSPLTISRRSTGDDDVVIKILYCGICHSDLHSIKNEWKNATYPLVPGHEIAGVVTEAGKNVTKFKGGDKVGVGCMVNSCHSCDSCNQGLENHCPGVIFTYNSVDKDGTVTYGGYSSMVVVHERFVVRFPEAMPLDKGAPLLCAGITVYSPMKYHGLNVPSKHVGVLGLGGLGHVAVKFAKAFGMTVTVISSSPGKRQEALERLGADAFVVSKNADEMNAATGTMDGIINTVSANIPIAPLLGLLKPNGKMILVGLPEKPMEIPPFALVASNKTLAGSCIGGMADTEMIDLAAKHGVTAEIEVIGADYVNTAMERLAKADVRYRFVIDIGNTLKDAIE</sequence>
<proteinExistence type="inferred from homology"/>
<keyword id="KW-0438">Lignin biosynthesis</keyword>
<keyword id="KW-0479">Metal-binding</keyword>
<keyword id="KW-0521">NADP</keyword>
<keyword id="KW-0560">Oxidoreductase</keyword>
<keyword id="KW-1185">Reference proteome</keyword>
<keyword id="KW-0862">Zinc</keyword>
<accession>Q0J6T3</accession>
<accession>A0A0P0XED6</accession>
<accession>A3BRE1</accession>
<accession>C7J6B6</accession>
<reference key="1">
    <citation type="journal article" date="2005" name="Nature">
        <title>The map-based sequence of the rice genome.</title>
        <authorList>
            <consortium name="International rice genome sequencing project (IRGSP)"/>
        </authorList>
    </citation>
    <scope>NUCLEOTIDE SEQUENCE [LARGE SCALE GENOMIC DNA]</scope>
    <source>
        <strain>cv. Nipponbare</strain>
    </source>
</reference>
<reference key="2">
    <citation type="journal article" date="2008" name="Nucleic Acids Res.">
        <title>The rice annotation project database (RAP-DB): 2008 update.</title>
        <authorList>
            <consortium name="The rice annotation project (RAP)"/>
        </authorList>
    </citation>
    <scope>GENOME REANNOTATION</scope>
    <source>
        <strain>cv. Nipponbare</strain>
    </source>
</reference>
<reference key="3">
    <citation type="journal article" date="2013" name="Rice">
        <title>Improvement of the Oryza sativa Nipponbare reference genome using next generation sequence and optical map data.</title>
        <authorList>
            <person name="Kawahara Y."/>
            <person name="de la Bastide M."/>
            <person name="Hamilton J.P."/>
            <person name="Kanamori H."/>
            <person name="McCombie W.R."/>
            <person name="Ouyang S."/>
            <person name="Schwartz D.C."/>
            <person name="Tanaka T."/>
            <person name="Wu J."/>
            <person name="Zhou S."/>
            <person name="Childs K.L."/>
            <person name="Davidson R.M."/>
            <person name="Lin H."/>
            <person name="Quesada-Ocampo L."/>
            <person name="Vaillancourt B."/>
            <person name="Sakai H."/>
            <person name="Lee S.S."/>
            <person name="Kim J."/>
            <person name="Numa H."/>
            <person name="Itoh T."/>
            <person name="Buell C.R."/>
            <person name="Matsumoto T."/>
        </authorList>
    </citation>
    <scope>GENOME REANNOTATION</scope>
    <source>
        <strain>cv. Nipponbare</strain>
    </source>
</reference>
<reference key="4">
    <citation type="journal article" date="2005" name="PLoS Biol.">
        <title>The genomes of Oryza sativa: a history of duplications.</title>
        <authorList>
            <person name="Yu J."/>
            <person name="Wang J."/>
            <person name="Lin W."/>
            <person name="Li S."/>
            <person name="Li H."/>
            <person name="Zhou J."/>
            <person name="Ni P."/>
            <person name="Dong W."/>
            <person name="Hu S."/>
            <person name="Zeng C."/>
            <person name="Zhang J."/>
            <person name="Zhang Y."/>
            <person name="Li R."/>
            <person name="Xu Z."/>
            <person name="Li S."/>
            <person name="Li X."/>
            <person name="Zheng H."/>
            <person name="Cong L."/>
            <person name="Lin L."/>
            <person name="Yin J."/>
            <person name="Geng J."/>
            <person name="Li G."/>
            <person name="Shi J."/>
            <person name="Liu J."/>
            <person name="Lv H."/>
            <person name="Li J."/>
            <person name="Wang J."/>
            <person name="Deng Y."/>
            <person name="Ran L."/>
            <person name="Shi X."/>
            <person name="Wang X."/>
            <person name="Wu Q."/>
            <person name="Li C."/>
            <person name="Ren X."/>
            <person name="Wang J."/>
            <person name="Wang X."/>
            <person name="Li D."/>
            <person name="Liu D."/>
            <person name="Zhang X."/>
            <person name="Ji Z."/>
            <person name="Zhao W."/>
            <person name="Sun Y."/>
            <person name="Zhang Z."/>
            <person name="Bao J."/>
            <person name="Han Y."/>
            <person name="Dong L."/>
            <person name="Ji J."/>
            <person name="Chen P."/>
            <person name="Wu S."/>
            <person name="Liu J."/>
            <person name="Xiao Y."/>
            <person name="Bu D."/>
            <person name="Tan J."/>
            <person name="Yang L."/>
            <person name="Ye C."/>
            <person name="Zhang J."/>
            <person name="Xu J."/>
            <person name="Zhou Y."/>
            <person name="Yu Y."/>
            <person name="Zhang B."/>
            <person name="Zhuang S."/>
            <person name="Wei H."/>
            <person name="Liu B."/>
            <person name="Lei M."/>
            <person name="Yu H."/>
            <person name="Li Y."/>
            <person name="Xu H."/>
            <person name="Wei S."/>
            <person name="He X."/>
            <person name="Fang L."/>
            <person name="Zhang Z."/>
            <person name="Zhang Y."/>
            <person name="Huang X."/>
            <person name="Su Z."/>
            <person name="Tong W."/>
            <person name="Li J."/>
            <person name="Tong Z."/>
            <person name="Li S."/>
            <person name="Ye J."/>
            <person name="Wang L."/>
            <person name="Fang L."/>
            <person name="Lei T."/>
            <person name="Chen C.-S."/>
            <person name="Chen H.-C."/>
            <person name="Xu Z."/>
            <person name="Li H."/>
            <person name="Huang H."/>
            <person name="Zhang F."/>
            <person name="Xu H."/>
            <person name="Li N."/>
            <person name="Zhao C."/>
            <person name="Li S."/>
            <person name="Dong L."/>
            <person name="Huang Y."/>
            <person name="Li L."/>
            <person name="Xi Y."/>
            <person name="Qi Q."/>
            <person name="Li W."/>
            <person name="Zhang B."/>
            <person name="Hu W."/>
            <person name="Zhang Y."/>
            <person name="Tian X."/>
            <person name="Jiao Y."/>
            <person name="Liang X."/>
            <person name="Jin J."/>
            <person name="Gao L."/>
            <person name="Zheng W."/>
            <person name="Hao B."/>
            <person name="Liu S.-M."/>
            <person name="Wang W."/>
            <person name="Yuan L."/>
            <person name="Cao M."/>
            <person name="McDermott J."/>
            <person name="Samudrala R."/>
            <person name="Wang J."/>
            <person name="Wong G.K.-S."/>
            <person name="Yang H."/>
        </authorList>
    </citation>
    <scope>NUCLEOTIDE SEQUENCE [LARGE SCALE GENOMIC DNA]</scope>
    <source>
        <strain>cv. Nipponbare</strain>
    </source>
</reference>
<reference key="5">
    <citation type="journal article" date="2005" name="Planta">
        <title>Structure of the cinnamyl-alcohol dehydrogenase gene family in rice and promoter activity of a member associated with lignification.</title>
        <authorList>
            <person name="Tobias C.M."/>
            <person name="Chow E.K."/>
        </authorList>
    </citation>
    <scope>GENE FAMILY</scope>
    <scope>NOMENCLATURE</scope>
</reference>
<name>CADH5_ORYSJ</name>
<comment type="function">
    <text evidence="1">Involved in lignin biosynthesis. Catalyzes the final step specific for the production of lignin monomers. Catalyzes the NADPH-dependent reduction of coniferaldehyde, 5-hydroxyconiferaldehyde, sinapaldehyde, 4-coumaraldehyde and caffeyl aldehyde to their respective alcohols.</text>
</comment>
<comment type="catalytic activity">
    <reaction evidence="1">
        <text>(E)-cinnamyl alcohol + NADP(+) = (E)-cinnamaldehyde + NADPH + H(+)</text>
        <dbReference type="Rhea" id="RHEA:10392"/>
        <dbReference type="ChEBI" id="CHEBI:15378"/>
        <dbReference type="ChEBI" id="CHEBI:16731"/>
        <dbReference type="ChEBI" id="CHEBI:33227"/>
        <dbReference type="ChEBI" id="CHEBI:57783"/>
        <dbReference type="ChEBI" id="CHEBI:58349"/>
        <dbReference type="EC" id="1.1.1.195"/>
    </reaction>
    <physiologicalReaction direction="right-to-left" evidence="1">
        <dbReference type="Rhea" id="RHEA:10394"/>
    </physiologicalReaction>
</comment>
<comment type="catalytic activity">
    <reaction evidence="1">
        <text>(E)-coniferol + NADP(+) = (E)-coniferaldehyde + NADPH + H(+)</text>
        <dbReference type="Rhea" id="RHEA:22444"/>
        <dbReference type="ChEBI" id="CHEBI:15378"/>
        <dbReference type="ChEBI" id="CHEBI:16547"/>
        <dbReference type="ChEBI" id="CHEBI:17745"/>
        <dbReference type="ChEBI" id="CHEBI:57783"/>
        <dbReference type="ChEBI" id="CHEBI:58349"/>
        <dbReference type="EC" id="1.1.1.195"/>
    </reaction>
    <physiologicalReaction direction="right-to-left" evidence="1">
        <dbReference type="Rhea" id="RHEA:22446"/>
    </physiologicalReaction>
</comment>
<comment type="catalytic activity">
    <reaction evidence="1">
        <text>(E)-sinapyl alcohol + NADP(+) = (E)-sinapaldehyde + NADPH + H(+)</text>
        <dbReference type="Rhea" id="RHEA:45704"/>
        <dbReference type="ChEBI" id="CHEBI:15378"/>
        <dbReference type="ChEBI" id="CHEBI:27949"/>
        <dbReference type="ChEBI" id="CHEBI:57783"/>
        <dbReference type="ChEBI" id="CHEBI:58349"/>
        <dbReference type="ChEBI" id="CHEBI:64557"/>
        <dbReference type="EC" id="1.1.1.195"/>
    </reaction>
    <physiologicalReaction direction="right-to-left" evidence="1">
        <dbReference type="Rhea" id="RHEA:45706"/>
    </physiologicalReaction>
</comment>
<comment type="catalytic activity">
    <reaction evidence="1">
        <text>(E)-4-coumaroyl alcohol + NADP(+) = (E)-4-coumaraldehyde + NADPH + H(+)</text>
        <dbReference type="Rhea" id="RHEA:45724"/>
        <dbReference type="ChEBI" id="CHEBI:15378"/>
        <dbReference type="ChEBI" id="CHEBI:28353"/>
        <dbReference type="ChEBI" id="CHEBI:57783"/>
        <dbReference type="ChEBI" id="CHEBI:58349"/>
        <dbReference type="ChEBI" id="CHEBI:64555"/>
        <dbReference type="EC" id="1.1.1.195"/>
    </reaction>
    <physiologicalReaction direction="right-to-left" evidence="1">
        <dbReference type="Rhea" id="RHEA:45726"/>
    </physiologicalReaction>
</comment>
<comment type="catalytic activity">
    <reaction evidence="1">
        <text>(E)-caffeyl alcohol + NADP(+) = (E)-caffeyl aldehyde + NADPH + H(+)</text>
        <dbReference type="Rhea" id="RHEA:45728"/>
        <dbReference type="ChEBI" id="CHEBI:15378"/>
        <dbReference type="ChEBI" id="CHEBI:28323"/>
        <dbReference type="ChEBI" id="CHEBI:31334"/>
        <dbReference type="ChEBI" id="CHEBI:57783"/>
        <dbReference type="ChEBI" id="CHEBI:58349"/>
    </reaction>
    <physiologicalReaction direction="right-to-left" evidence="1">
        <dbReference type="Rhea" id="RHEA:45730"/>
    </physiologicalReaction>
</comment>
<comment type="cofactor">
    <cofactor evidence="1">
        <name>Zn(2+)</name>
        <dbReference type="ChEBI" id="CHEBI:29105"/>
    </cofactor>
    <text evidence="1">Binds 2 Zn(2+) ions per subunit.</text>
</comment>
<comment type="pathway">
    <text evidence="1">Aromatic compound metabolism; phenylpropanoid biosynthesis.</text>
</comment>
<comment type="subunit">
    <text evidence="1">Homodimer.</text>
</comment>
<comment type="similarity">
    <text evidence="3">Belongs to the zinc-containing alcohol dehydrogenase family.</text>
</comment>
<comment type="sequence caution" evidence="3">
    <conflict type="erroneous gene model prediction">
        <sequence resource="EMBL-CDS" id="BAH94216"/>
    </conflict>
</comment>
<comment type="sequence caution" evidence="3">
    <conflict type="erroneous gene model prediction">
        <sequence resource="EMBL-CDS" id="BAT04648"/>
    </conflict>
</comment>
<dbReference type="EC" id="1.1.1.195" evidence="1"/>
<dbReference type="EMBL" id="AP005731">
    <property type="status" value="NOT_ANNOTATED_CDS"/>
    <property type="molecule type" value="Genomic_DNA"/>
</dbReference>
<dbReference type="EMBL" id="AP008214">
    <property type="protein sequence ID" value="BAH94216.1"/>
    <property type="status" value="ALT_SEQ"/>
    <property type="molecule type" value="Genomic_DNA"/>
</dbReference>
<dbReference type="EMBL" id="AP014964">
    <property type="protein sequence ID" value="BAT04648.1"/>
    <property type="status" value="ALT_SEQ"/>
    <property type="molecule type" value="Genomic_DNA"/>
</dbReference>
<dbReference type="EMBL" id="CM000145">
    <property type="protein sequence ID" value="EAZ42130.1"/>
    <property type="molecule type" value="Genomic_DNA"/>
</dbReference>
<dbReference type="SMR" id="Q0J6T3"/>
<dbReference type="FunCoup" id="Q0J6T3">
    <property type="interactions" value="69"/>
</dbReference>
<dbReference type="STRING" id="39947.Q0J6T3"/>
<dbReference type="PaxDb" id="39947-Q0J6T3"/>
<dbReference type="KEGG" id="dosa:Os08g0270466"/>
<dbReference type="eggNOG" id="KOG0023">
    <property type="taxonomic scope" value="Eukaryota"/>
</dbReference>
<dbReference type="InParanoid" id="Q0J6T3"/>
<dbReference type="UniPathway" id="UPA00711"/>
<dbReference type="Proteomes" id="UP000000763">
    <property type="component" value="Chromosome 8"/>
</dbReference>
<dbReference type="Proteomes" id="UP000007752">
    <property type="component" value="Chromosome 8"/>
</dbReference>
<dbReference type="Proteomes" id="UP000059680">
    <property type="component" value="Chromosome 8"/>
</dbReference>
<dbReference type="GO" id="GO:0045551">
    <property type="term" value="F:cinnamyl-alcohol dehydrogenase activity"/>
    <property type="evidence" value="ECO:0000318"/>
    <property type="project" value="GO_Central"/>
</dbReference>
<dbReference type="GO" id="GO:0050268">
    <property type="term" value="F:coniferyl-alcohol dehydrogenase activity"/>
    <property type="evidence" value="ECO:0007669"/>
    <property type="project" value="RHEA"/>
</dbReference>
<dbReference type="GO" id="GO:0008270">
    <property type="term" value="F:zinc ion binding"/>
    <property type="evidence" value="ECO:0007669"/>
    <property type="project" value="InterPro"/>
</dbReference>
<dbReference type="GO" id="GO:0009809">
    <property type="term" value="P:lignin biosynthetic process"/>
    <property type="evidence" value="ECO:0000318"/>
    <property type="project" value="GO_Central"/>
</dbReference>
<dbReference type="CDD" id="cd05283">
    <property type="entry name" value="CAD1"/>
    <property type="match status" value="1"/>
</dbReference>
<dbReference type="FunFam" id="3.40.50.720:FF:000022">
    <property type="entry name" value="Cinnamyl alcohol dehydrogenase"/>
    <property type="match status" value="1"/>
</dbReference>
<dbReference type="FunFam" id="3.90.180.10:FF:000004">
    <property type="entry name" value="probable cinnamyl alcohol dehydrogenase"/>
    <property type="match status" value="1"/>
</dbReference>
<dbReference type="FunFam" id="3.90.180.10:FF:000100">
    <property type="entry name" value="Putative cinnamyl alcohol dehydrogenase 6"/>
    <property type="match status" value="1"/>
</dbReference>
<dbReference type="Gene3D" id="3.90.180.10">
    <property type="entry name" value="Medium-chain alcohol dehydrogenases, catalytic domain"/>
    <property type="match status" value="1"/>
</dbReference>
<dbReference type="Gene3D" id="3.40.50.720">
    <property type="entry name" value="NAD(P)-binding Rossmann-like Domain"/>
    <property type="match status" value="1"/>
</dbReference>
<dbReference type="InterPro" id="IPR013149">
    <property type="entry name" value="ADH-like_C"/>
</dbReference>
<dbReference type="InterPro" id="IPR013154">
    <property type="entry name" value="ADH-like_N"/>
</dbReference>
<dbReference type="InterPro" id="IPR002328">
    <property type="entry name" value="ADH_Zn_CS"/>
</dbReference>
<dbReference type="InterPro" id="IPR047109">
    <property type="entry name" value="CAD-like"/>
</dbReference>
<dbReference type="InterPro" id="IPR011032">
    <property type="entry name" value="GroES-like_sf"/>
</dbReference>
<dbReference type="InterPro" id="IPR036291">
    <property type="entry name" value="NAD(P)-bd_dom_sf"/>
</dbReference>
<dbReference type="InterPro" id="IPR020843">
    <property type="entry name" value="PKS_ER"/>
</dbReference>
<dbReference type="PANTHER" id="PTHR42683">
    <property type="entry name" value="ALDEHYDE REDUCTASE"/>
    <property type="match status" value="1"/>
</dbReference>
<dbReference type="Pfam" id="PF08240">
    <property type="entry name" value="ADH_N"/>
    <property type="match status" value="1"/>
</dbReference>
<dbReference type="Pfam" id="PF00107">
    <property type="entry name" value="ADH_zinc_N"/>
    <property type="match status" value="1"/>
</dbReference>
<dbReference type="SMART" id="SM00829">
    <property type="entry name" value="PKS_ER"/>
    <property type="match status" value="1"/>
</dbReference>
<dbReference type="SUPFAM" id="SSF50129">
    <property type="entry name" value="GroES-like"/>
    <property type="match status" value="1"/>
</dbReference>
<dbReference type="SUPFAM" id="SSF51735">
    <property type="entry name" value="NAD(P)-binding Rossmann-fold domains"/>
    <property type="match status" value="1"/>
</dbReference>
<dbReference type="PROSITE" id="PS00059">
    <property type="entry name" value="ADH_ZINC"/>
    <property type="match status" value="1"/>
</dbReference>